<accession>Q9NWQ8</accession>
<accession>A8K1A3</accession>
<accession>Q2M1Z9</accession>
<accession>Q5BKU4</accession>
<accession>Q9NYK0</accession>
<gene>
    <name type="primary">PAG1</name>
    <name type="synonym">CBP</name>
    <name type="synonym">PAG</name>
</gene>
<evidence type="ECO:0000250" key="1">
    <source>
        <dbReference type="UniProtKB" id="Q3U1F9"/>
    </source>
</evidence>
<evidence type="ECO:0000250" key="2">
    <source>
        <dbReference type="UniProtKB" id="Q9JM80"/>
    </source>
</evidence>
<evidence type="ECO:0000255" key="3"/>
<evidence type="ECO:0000256" key="4">
    <source>
        <dbReference type="SAM" id="MobiDB-lite"/>
    </source>
</evidence>
<evidence type="ECO:0000269" key="5">
    <source>
    </source>
</evidence>
<evidence type="ECO:0000269" key="6">
    <source>
    </source>
</evidence>
<evidence type="ECO:0000269" key="7">
    <source>
    </source>
</evidence>
<evidence type="ECO:0000269" key="8">
    <source>
    </source>
</evidence>
<evidence type="ECO:0000305" key="9"/>
<evidence type="ECO:0000305" key="10">
    <source>
    </source>
</evidence>
<evidence type="ECO:0007744" key="11">
    <source>
    </source>
</evidence>
<protein>
    <recommendedName>
        <fullName>Phosphoprotein associated with glycosphingolipid-enriched microdomains 1</fullName>
    </recommendedName>
    <alternativeName>
        <fullName>Csk-binding protein</fullName>
    </alternativeName>
    <alternativeName>
        <fullName>Transmembrane adapter protein PAG</fullName>
    </alternativeName>
    <alternativeName>
        <fullName>Transmembrane phosphoprotein Cbp</fullName>
    </alternativeName>
</protein>
<organism>
    <name type="scientific">Homo sapiens</name>
    <name type="common">Human</name>
    <dbReference type="NCBI Taxonomy" id="9606"/>
    <lineage>
        <taxon>Eukaryota</taxon>
        <taxon>Metazoa</taxon>
        <taxon>Chordata</taxon>
        <taxon>Craniata</taxon>
        <taxon>Vertebrata</taxon>
        <taxon>Euteleostomi</taxon>
        <taxon>Mammalia</taxon>
        <taxon>Eutheria</taxon>
        <taxon>Euarchontoglires</taxon>
        <taxon>Primates</taxon>
        <taxon>Haplorrhini</taxon>
        <taxon>Catarrhini</taxon>
        <taxon>Hominidae</taxon>
        <taxon>Homo</taxon>
    </lineage>
</organism>
<proteinExistence type="evidence at protein level"/>
<sequence>MGPAGSLLGSGQMQITLWGSLAAVAIFFVITFLIFLCSSCDREKKPRQHSGDHENLMNVPSDKEMFSRSVTSLATDAPASSEQNGALTNGDILSEDSTLTCMQHYEEVQTSASDLLDSQDSTGKPKCHQSRELPRIPPESAVDTMLTARSVDGDQGLGMEGPYEVLKDSSSQENMVEDCLYETVKEIKEVAAAAHLEKGHSGKAKSTSASKELPGPQTEGKAEFAEYASVDRNKKCRQSVNVESILGNSCDPEEEAPPPVPVKLLDENENLQEKEGGEAEESATDTTSETNKRFSSLSYKSREEDPTLTEEEISAMYSSVNKPGQLVNKSGQSLTVPESTYTSIQGDPQRSPSSCNDLYATVKDFEKTPNSTLPPAGRPSEEPEPDYEAIQTLNREEEKATLGTNGHHGLVPKENDYESISDLQQGRDITRL</sequence>
<keyword id="KW-1064">Adaptive immunity</keyword>
<keyword id="KW-1003">Cell membrane</keyword>
<keyword id="KW-0903">Direct protein sequencing</keyword>
<keyword id="KW-0391">Immunity</keyword>
<keyword id="KW-0449">Lipoprotein</keyword>
<keyword id="KW-0472">Membrane</keyword>
<keyword id="KW-0564">Palmitate</keyword>
<keyword id="KW-0597">Phosphoprotein</keyword>
<keyword id="KW-1267">Proteomics identification</keyword>
<keyword id="KW-1185">Reference proteome</keyword>
<keyword id="KW-0735">Signal-anchor</keyword>
<keyword id="KW-0812">Transmembrane</keyword>
<keyword id="KW-1133">Transmembrane helix</keyword>
<name>PHAG1_HUMAN</name>
<feature type="chain" id="PRO_0000083338" description="Phosphoprotein associated with glycosphingolipid-enriched microdomains 1">
    <location>
        <begin position="1"/>
        <end position="432"/>
    </location>
</feature>
<feature type="topological domain" description="Extracellular" evidence="3">
    <location>
        <begin position="1"/>
        <end position="16"/>
    </location>
</feature>
<feature type="transmembrane region" description="Helical; Signal-anchor for type III membrane protein" evidence="3">
    <location>
        <begin position="17"/>
        <end position="37"/>
    </location>
</feature>
<feature type="topological domain" description="Cytoplasmic" evidence="3">
    <location>
        <begin position="38"/>
        <end position="432"/>
    </location>
</feature>
<feature type="region of interest" description="Disordered" evidence="4">
    <location>
        <begin position="110"/>
        <end position="137"/>
    </location>
</feature>
<feature type="region of interest" description="Disordered" evidence="4">
    <location>
        <begin position="197"/>
        <end position="230"/>
    </location>
</feature>
<feature type="region of interest" description="Disordered" evidence="4">
    <location>
        <begin position="244"/>
        <end position="432"/>
    </location>
</feature>
<feature type="region of interest" description="Interaction with CSK" evidence="5">
    <location>
        <begin position="317"/>
        <end position="320"/>
    </location>
</feature>
<feature type="region of interest" description="Interaction with NHERF1" evidence="6">
    <location>
        <begin position="430"/>
        <end position="432"/>
    </location>
</feature>
<feature type="compositionally biased region" description="Polar residues" evidence="4">
    <location>
        <begin position="110"/>
        <end position="122"/>
    </location>
</feature>
<feature type="compositionally biased region" description="Basic and acidic residues" evidence="4">
    <location>
        <begin position="220"/>
        <end position="230"/>
    </location>
</feature>
<feature type="compositionally biased region" description="Polar residues" evidence="4">
    <location>
        <begin position="316"/>
        <end position="356"/>
    </location>
</feature>
<feature type="modified residue" description="Phosphoserine" evidence="2">
    <location>
        <position position="50"/>
    </location>
</feature>
<feature type="modified residue" description="Phosphoserine" evidence="2">
    <location>
        <position position="61"/>
    </location>
</feature>
<feature type="modified residue" description="Phosphotyrosine; by LYN" evidence="2">
    <location>
        <position position="105"/>
    </location>
</feature>
<feature type="modified residue" description="Phosphotyrosine" evidence="1">
    <location>
        <position position="163"/>
    </location>
</feature>
<feature type="modified residue" description="Phosphotyrosine" evidence="1">
    <location>
        <position position="181"/>
    </location>
</feature>
<feature type="modified residue" description="Phosphotyrosine" evidence="11">
    <location>
        <position position="227"/>
    </location>
</feature>
<feature type="modified residue" description="Phosphoserine" evidence="11">
    <location>
        <position position="229"/>
    </location>
</feature>
<feature type="modified residue" description="Phosphotyrosine; by FYN and LYN" evidence="5 8 11">
    <location>
        <position position="317"/>
    </location>
</feature>
<feature type="modified residue" description="Phosphoserine" evidence="1">
    <location>
        <position position="354"/>
    </location>
</feature>
<feature type="modified residue" description="Phosphotyrosine" evidence="11">
    <location>
        <position position="359"/>
    </location>
</feature>
<feature type="modified residue" description="Phosphoserine" evidence="1">
    <location>
        <position position="380"/>
    </location>
</feature>
<feature type="modified residue" description="Phosphotyrosine" evidence="11">
    <location>
        <position position="387"/>
    </location>
</feature>
<feature type="modified residue" description="Phosphotyrosine" evidence="11">
    <location>
        <position position="417"/>
    </location>
</feature>
<feature type="lipid moiety-binding region" description="S-palmitoyl cysteine" evidence="10">
    <location>
        <position position="37"/>
    </location>
</feature>
<feature type="lipid moiety-binding region" description="S-palmitoyl cysteine" evidence="10">
    <location>
        <position position="40"/>
    </location>
</feature>
<feature type="mutagenesis site" description="No effect on interaction with FYN or CSK." evidence="5">
    <original>Y</original>
    <variation>F</variation>
    <location>
        <position position="105"/>
    </location>
</feature>
<feature type="mutagenesis site" description="No effect on interaction with FYN or CSK." evidence="5">
    <original>Y</original>
    <variation>F</variation>
    <location>
        <position position="163"/>
    </location>
</feature>
<feature type="mutagenesis site" description="No effect on interaction with FYN or CSK." evidence="5">
    <original>Y</original>
    <variation>F</variation>
    <location>
        <position position="181"/>
    </location>
</feature>
<feature type="mutagenesis site" description="No effect on interaction with FYN or CSK." evidence="5">
    <original>Y</original>
    <variation>F</variation>
    <location>
        <position position="227"/>
    </location>
</feature>
<feature type="mutagenesis site" description="No effect on interaction with FYN or CSK." evidence="5">
    <original>Y</original>
    <variation>F</variation>
    <location>
        <position position="299"/>
    </location>
</feature>
<feature type="mutagenesis site" description="No effect on interaction with FYN. Abolishes interaction with CSK." evidence="5">
    <original>Y</original>
    <variation>F</variation>
    <location>
        <position position="317"/>
    </location>
</feature>
<feature type="mutagenesis site" description="No effect on interaction with FYN or CSK." evidence="5">
    <original>Y</original>
    <variation>F</variation>
    <location>
        <position position="341"/>
    </location>
</feature>
<feature type="mutagenesis site" description="No effect on interaction with FYN or CSK." evidence="5">
    <original>Y</original>
    <variation>F</variation>
    <location>
        <position position="359"/>
    </location>
</feature>
<feature type="mutagenesis site" description="No effect on interaction with FYN or CSK." evidence="5">
    <original>Y</original>
    <variation>F</variation>
    <location>
        <position position="387"/>
    </location>
</feature>
<feature type="mutagenesis site" description="No effect on interaction with FYN or CSK." evidence="5">
    <original>Y</original>
    <variation>F</variation>
    <location>
        <position position="417"/>
    </location>
</feature>
<feature type="sequence conflict" description="In Ref. 4; AAH90931." evidence="9" ref="4">
    <original>A</original>
    <variation>V</variation>
    <location>
        <position position="4"/>
    </location>
</feature>
<feature type="sequence conflict" description="In Ref. 2; BAA91321." evidence="9" ref="2">
    <original>L</original>
    <variation>P</variation>
    <location>
        <position position="36"/>
    </location>
</feature>
<comment type="function">
    <text evidence="5">Negatively regulates TCR (T-cell antigen receptor)-mediated signaling in T-cells and FCER1 (high affinity immunoglobulin epsilon receptor)-mediated signaling in mast cells. Promotes CSK activation and recruitment to lipid rafts, which results in LCK inhibition. Inhibits immunological synapse formation by preventing dynamic arrangement of lipid raft proteins. May be involved in cell adhesion signaling.</text>
</comment>
<comment type="subunit">
    <text evidence="5 6 8">Interacts with FYN. When phosphorylated, interacts with CSK. Interacts with NHERF1/EBP50. In resting T-cells, part of a PAG1-NHERF1-MSN complex which is disrupted upon TCR activation. Interacts with LYN on plasma membrane lipid rafts. Identified in a complex with LYN and STAT3.</text>
</comment>
<comment type="interaction">
    <interactant intactId="EBI-2828115">
        <id>Q9NWQ8</id>
    </interactant>
    <interactant intactId="EBI-1380630">
        <id>P41240</id>
        <label>CSK</label>
    </interactant>
    <organismsDiffer>false</organismsDiffer>
    <experiments>6</experiments>
</comment>
<comment type="interaction">
    <interactant intactId="EBI-2828115">
        <id>Q9NWQ8</id>
    </interactant>
    <interactant intactId="EBI-515315">
        <id>P06241</id>
        <label>FYN</label>
    </interactant>
    <organismsDiffer>false</organismsDiffer>
    <experiments>5</experiments>
</comment>
<comment type="interaction">
    <interactant intactId="EBI-2828115">
        <id>Q9NWQ8</id>
    </interactant>
    <interactant intactId="EBI-79452">
        <id>P07948</id>
        <label>LYN</label>
    </interactant>
    <organismsDiffer>false</organismsDiffer>
    <experiments>16</experiments>
</comment>
<comment type="interaction">
    <interactant intactId="EBI-2828115">
        <id>Q9NWQ8</id>
    </interactant>
    <interactant intactId="EBI-296739">
        <id>P63244</id>
        <label>RACK1</label>
    </interactant>
    <organismsDiffer>false</organismsDiffer>
    <experiments>2</experiments>
</comment>
<comment type="subcellular location">
    <subcellularLocation>
        <location evidence="5 8">Cell membrane</location>
        <topology evidence="5 8">Single-pass type III membrane protein</topology>
    </subcellularLocation>
    <text>Present in lipid rafts.</text>
</comment>
<comment type="tissue specificity">
    <text evidence="5 7">Ubiquitously expressed. Present in germinal center B-cells, plasma cells, T-cells, monocytes and platelets (at protein level).</text>
</comment>
<comment type="PTM">
    <text evidence="5">Palmitoylated.</text>
</comment>
<comment type="PTM">
    <text evidence="5 8">Phosphorylated by FYN on Tyr-317 in resting T-cells; which promotes interaction with CSK. Dephosphorylated by PTPRC/CD45 upon TCR activation; which leads to CSK dissociation. May also be dephosphorylated by PTPN11. Hyperphosphorylated in mast cells upon FCER1 activation. Phosphorylated by LYN.</text>
</comment>
<dbReference type="EMBL" id="AF240634">
    <property type="protein sequence ID" value="AAF67343.1"/>
    <property type="molecule type" value="mRNA"/>
</dbReference>
<dbReference type="EMBL" id="AK000680">
    <property type="protein sequence ID" value="BAA91321.1"/>
    <property type="molecule type" value="mRNA"/>
</dbReference>
<dbReference type="EMBL" id="AK289818">
    <property type="protein sequence ID" value="BAF82507.1"/>
    <property type="molecule type" value="mRNA"/>
</dbReference>
<dbReference type="EMBL" id="CH471068">
    <property type="protein sequence ID" value="EAW87086.1"/>
    <property type="molecule type" value="Genomic_DNA"/>
</dbReference>
<dbReference type="EMBL" id="BC090931">
    <property type="protein sequence ID" value="AAH90931.1"/>
    <property type="molecule type" value="mRNA"/>
</dbReference>
<dbReference type="EMBL" id="BC112159">
    <property type="protein sequence ID" value="AAI12160.1"/>
    <property type="molecule type" value="mRNA"/>
</dbReference>
<dbReference type="CCDS" id="CCDS6227.1"/>
<dbReference type="RefSeq" id="NP_060910.3">
    <property type="nucleotide sequence ID" value="NM_018440.3"/>
</dbReference>
<dbReference type="RefSeq" id="XP_016869129.1">
    <property type="nucleotide sequence ID" value="XM_017013640.1"/>
</dbReference>
<dbReference type="RefSeq" id="XP_016869130.1">
    <property type="nucleotide sequence ID" value="XM_017013641.1"/>
</dbReference>
<dbReference type="RefSeq" id="XP_016869131.1">
    <property type="nucleotide sequence ID" value="XM_017013642.3"/>
</dbReference>
<dbReference type="RefSeq" id="XP_016869132.1">
    <property type="nucleotide sequence ID" value="XM_017013643.2"/>
</dbReference>
<dbReference type="RefSeq" id="XP_047277936.1">
    <property type="nucleotide sequence ID" value="XM_047421980.1"/>
</dbReference>
<dbReference type="RefSeq" id="XP_047277937.1">
    <property type="nucleotide sequence ID" value="XM_047421981.1"/>
</dbReference>
<dbReference type="RefSeq" id="XP_047277938.1">
    <property type="nucleotide sequence ID" value="XM_047421982.1"/>
</dbReference>
<dbReference type="RefSeq" id="XP_047277939.1">
    <property type="nucleotide sequence ID" value="XM_047421983.1"/>
</dbReference>
<dbReference type="RefSeq" id="XP_047277940.1">
    <property type="nucleotide sequence ID" value="XM_047421984.1"/>
</dbReference>
<dbReference type="RefSeq" id="XP_047277941.1">
    <property type="nucleotide sequence ID" value="XM_047421985.1"/>
</dbReference>
<dbReference type="RefSeq" id="XP_047277942.1">
    <property type="nucleotide sequence ID" value="XM_047421986.1"/>
</dbReference>
<dbReference type="RefSeq" id="XP_047277943.1">
    <property type="nucleotide sequence ID" value="XM_047421987.1"/>
</dbReference>
<dbReference type="RefSeq" id="XP_047277944.1">
    <property type="nucleotide sequence ID" value="XM_047421988.1"/>
</dbReference>
<dbReference type="RefSeq" id="XP_047277945.1">
    <property type="nucleotide sequence ID" value="XM_047421989.1"/>
</dbReference>
<dbReference type="RefSeq" id="XP_047277946.1">
    <property type="nucleotide sequence ID" value="XM_047421990.1"/>
</dbReference>
<dbReference type="RefSeq" id="XP_047277947.1">
    <property type="nucleotide sequence ID" value="XM_047421991.1"/>
</dbReference>
<dbReference type="RefSeq" id="XP_047277948.1">
    <property type="nucleotide sequence ID" value="XM_047421992.1"/>
</dbReference>
<dbReference type="RefSeq" id="XP_047277949.1">
    <property type="nucleotide sequence ID" value="XM_047421993.1"/>
</dbReference>
<dbReference type="RefSeq" id="XP_054216809.1">
    <property type="nucleotide sequence ID" value="XM_054360834.1"/>
</dbReference>
<dbReference type="RefSeq" id="XP_054216810.1">
    <property type="nucleotide sequence ID" value="XM_054360835.1"/>
</dbReference>
<dbReference type="RefSeq" id="XP_054216811.1">
    <property type="nucleotide sequence ID" value="XM_054360836.1"/>
</dbReference>
<dbReference type="RefSeq" id="XP_054216812.1">
    <property type="nucleotide sequence ID" value="XM_054360837.1"/>
</dbReference>
<dbReference type="RefSeq" id="XP_054216813.1">
    <property type="nucleotide sequence ID" value="XM_054360838.1"/>
</dbReference>
<dbReference type="RefSeq" id="XP_054216814.1">
    <property type="nucleotide sequence ID" value="XM_054360839.1"/>
</dbReference>
<dbReference type="RefSeq" id="XP_054216815.1">
    <property type="nucleotide sequence ID" value="XM_054360840.1"/>
</dbReference>
<dbReference type="RefSeq" id="XP_054216816.1">
    <property type="nucleotide sequence ID" value="XM_054360841.1"/>
</dbReference>
<dbReference type="SMR" id="Q9NWQ8"/>
<dbReference type="BioGRID" id="120931">
    <property type="interactions" value="62"/>
</dbReference>
<dbReference type="CORUM" id="Q9NWQ8"/>
<dbReference type="FunCoup" id="Q9NWQ8">
    <property type="interactions" value="735"/>
</dbReference>
<dbReference type="IntAct" id="Q9NWQ8">
    <property type="interactions" value="62"/>
</dbReference>
<dbReference type="MINT" id="Q9NWQ8"/>
<dbReference type="STRING" id="9606.ENSP00000220597"/>
<dbReference type="iPTMnet" id="Q9NWQ8"/>
<dbReference type="PhosphoSitePlus" id="Q9NWQ8"/>
<dbReference type="SwissPalm" id="Q9NWQ8"/>
<dbReference type="BioMuta" id="PAG1"/>
<dbReference type="DMDM" id="84029384"/>
<dbReference type="jPOST" id="Q9NWQ8"/>
<dbReference type="MassIVE" id="Q9NWQ8"/>
<dbReference type="PaxDb" id="9606-ENSP00000220597"/>
<dbReference type="PeptideAtlas" id="Q9NWQ8"/>
<dbReference type="ProteomicsDB" id="82961"/>
<dbReference type="Pumba" id="Q9NWQ8"/>
<dbReference type="TopDownProteomics" id="Q9NWQ8"/>
<dbReference type="Antibodypedia" id="1175">
    <property type="antibodies" value="355 antibodies from 35 providers"/>
</dbReference>
<dbReference type="DNASU" id="55824"/>
<dbReference type="Ensembl" id="ENST00000220597.4">
    <property type="protein sequence ID" value="ENSP00000220597.3"/>
    <property type="gene ID" value="ENSG00000076641.4"/>
</dbReference>
<dbReference type="GeneID" id="55824"/>
<dbReference type="KEGG" id="hsa:55824"/>
<dbReference type="MANE-Select" id="ENST00000220597.4">
    <property type="protein sequence ID" value="ENSP00000220597.3"/>
    <property type="RefSeq nucleotide sequence ID" value="NM_018440.4"/>
    <property type="RefSeq protein sequence ID" value="NP_060910.3"/>
</dbReference>
<dbReference type="UCSC" id="uc003ybz.4">
    <property type="organism name" value="human"/>
</dbReference>
<dbReference type="AGR" id="HGNC:30043"/>
<dbReference type="CTD" id="55824"/>
<dbReference type="DisGeNET" id="55824"/>
<dbReference type="GeneCards" id="PAG1"/>
<dbReference type="HGNC" id="HGNC:30043">
    <property type="gene designation" value="PAG1"/>
</dbReference>
<dbReference type="HPA" id="ENSG00000076641">
    <property type="expression patterns" value="Low tissue specificity"/>
</dbReference>
<dbReference type="MalaCards" id="PAG1"/>
<dbReference type="MIM" id="605767">
    <property type="type" value="gene"/>
</dbReference>
<dbReference type="neXtProt" id="NX_Q9NWQ8"/>
<dbReference type="OpenTargets" id="ENSG00000076641"/>
<dbReference type="PharmGKB" id="PA142671201"/>
<dbReference type="VEuPathDB" id="HostDB:ENSG00000076641"/>
<dbReference type="eggNOG" id="ENOG502QUCZ">
    <property type="taxonomic scope" value="Eukaryota"/>
</dbReference>
<dbReference type="GeneTree" id="ENSGT00390000002061"/>
<dbReference type="HOGENOM" id="CLU_051189_1_0_1"/>
<dbReference type="InParanoid" id="Q9NWQ8"/>
<dbReference type="OMA" id="QCRDITR"/>
<dbReference type="OrthoDB" id="9874312at2759"/>
<dbReference type="PAN-GO" id="Q9NWQ8">
    <property type="GO annotations" value="4 GO annotations based on evolutionary models"/>
</dbReference>
<dbReference type="PhylomeDB" id="Q9NWQ8"/>
<dbReference type="TreeFam" id="TF336170"/>
<dbReference type="PathwayCommons" id="Q9NWQ8"/>
<dbReference type="Reactome" id="R-HSA-180292">
    <property type="pathway name" value="GAB1 signalosome"/>
</dbReference>
<dbReference type="Reactome" id="R-HSA-202427">
    <property type="pathway name" value="Phosphorylation of CD3 and TCR zeta chains"/>
</dbReference>
<dbReference type="SignaLink" id="Q9NWQ8"/>
<dbReference type="SIGNOR" id="Q9NWQ8"/>
<dbReference type="BioGRID-ORCS" id="55824">
    <property type="hits" value="24 hits in 1147 CRISPR screens"/>
</dbReference>
<dbReference type="ChiTaRS" id="PAG1">
    <property type="organism name" value="human"/>
</dbReference>
<dbReference type="GeneWiki" id="PAG1"/>
<dbReference type="GenomeRNAi" id="55824"/>
<dbReference type="Pharos" id="Q9NWQ8">
    <property type="development level" value="Tbio"/>
</dbReference>
<dbReference type="PRO" id="PR:Q9NWQ8"/>
<dbReference type="Proteomes" id="UP000005640">
    <property type="component" value="Chromosome 8"/>
</dbReference>
<dbReference type="RNAct" id="Q9NWQ8">
    <property type="molecule type" value="protein"/>
</dbReference>
<dbReference type="Bgee" id="ENSG00000076641">
    <property type="expression patterns" value="Expressed in secondary oocyte and 189 other cell types or tissues"/>
</dbReference>
<dbReference type="GO" id="GO:0045121">
    <property type="term" value="C:membrane raft"/>
    <property type="evidence" value="ECO:0000314"/>
    <property type="project" value="HGNC-UCL"/>
</dbReference>
<dbReference type="GO" id="GO:0005886">
    <property type="term" value="C:plasma membrane"/>
    <property type="evidence" value="ECO:0000314"/>
    <property type="project" value="HGNC-UCL"/>
</dbReference>
<dbReference type="GO" id="GO:0042169">
    <property type="term" value="F:SH2 domain binding"/>
    <property type="evidence" value="ECO:0000314"/>
    <property type="project" value="HGNC-UCL"/>
</dbReference>
<dbReference type="GO" id="GO:0035591">
    <property type="term" value="F:signaling adaptor activity"/>
    <property type="evidence" value="ECO:0000303"/>
    <property type="project" value="HGNC-UCL"/>
</dbReference>
<dbReference type="GO" id="GO:0002250">
    <property type="term" value="P:adaptive immune response"/>
    <property type="evidence" value="ECO:0007669"/>
    <property type="project" value="UniProtKB-KW"/>
</dbReference>
<dbReference type="GO" id="GO:0035556">
    <property type="term" value="P:intracellular signal transduction"/>
    <property type="evidence" value="ECO:0000314"/>
    <property type="project" value="HGNC-UCL"/>
</dbReference>
<dbReference type="GO" id="GO:0050868">
    <property type="term" value="P:negative regulation of T cell activation"/>
    <property type="evidence" value="ECO:0000318"/>
    <property type="project" value="GO_Central"/>
</dbReference>
<dbReference type="GO" id="GO:0050863">
    <property type="term" value="P:regulation of T cell activation"/>
    <property type="evidence" value="ECO:0000314"/>
    <property type="project" value="ProtInc"/>
</dbReference>
<dbReference type="GO" id="GO:0007165">
    <property type="term" value="P:signal transduction"/>
    <property type="evidence" value="ECO:0000304"/>
    <property type="project" value="ProtInc"/>
</dbReference>
<dbReference type="InterPro" id="IPR032748">
    <property type="entry name" value="PAG"/>
</dbReference>
<dbReference type="PANTHER" id="PTHR16322">
    <property type="entry name" value="PHOSPHOPROTEIN ASSOCIATED WITH GLYCOSPHINGOLIPID-ENRICHED MICRODOMAINS 1"/>
    <property type="match status" value="1"/>
</dbReference>
<dbReference type="PANTHER" id="PTHR16322:SF0">
    <property type="entry name" value="PHOSPHOPROTEIN ASSOCIATED WITH GLYCOSPHINGOLIPID-ENRICHED MICRODOMAINS 1"/>
    <property type="match status" value="1"/>
</dbReference>
<dbReference type="Pfam" id="PF15347">
    <property type="entry name" value="PAG"/>
    <property type="match status" value="1"/>
</dbReference>
<reference key="1">
    <citation type="journal article" date="2000" name="J. Exp. Med.">
        <title>Phosphoprotein associated with glycosphingolipid-enriched microdomains (PAG), a novel ubiquitously expressed transmembrane adaptor protein, binds the protein tyrosine kinase csk and is involved in regulation of T cell activation.</title>
        <authorList>
            <person name="Brdicka T."/>
            <person name="Pavlistova D."/>
            <person name="Bruyns E."/>
            <person name="Leo A."/>
            <person name="Korinek V."/>
            <person name="Angelisova P."/>
            <person name="Scherer J."/>
            <person name="Shevchenko A."/>
            <person name="Shevchenko A."/>
            <person name="Hilgert I."/>
            <person name="Cerny J."/>
            <person name="Drbal K."/>
            <person name="Kuramitsu Y."/>
            <person name="Horejsi V."/>
            <person name="Schraven B."/>
        </authorList>
    </citation>
    <scope>NUCLEOTIDE SEQUENCE [MRNA]</scope>
    <scope>PROTEIN SEQUENCE OF 264-274</scope>
    <scope>IDENTIFICATION BY MASS SPECTROMETRY</scope>
    <scope>PHOSPHORYLATION AT TYR-317</scope>
    <scope>TISSUE SPECIFICITY</scope>
    <scope>SUBCELLULAR LOCATION</scope>
    <scope>PALMITOYLATION AT CYS-37 AND CYS-40</scope>
    <scope>MUTAGENESIS OF TYR-105; TYR-163; TYR-181; TYR-227; TYR-299; TYR-317; TYR-341; TYR-359; TYR-387 AND TYR-417</scope>
    <scope>INTERACTION WITH FYN AND CSK</scope>
    <scope>FUNCTION</scope>
</reference>
<reference key="2">
    <citation type="journal article" date="2004" name="Nat. Genet.">
        <title>Complete sequencing and characterization of 21,243 full-length human cDNAs.</title>
        <authorList>
            <person name="Ota T."/>
            <person name="Suzuki Y."/>
            <person name="Nishikawa T."/>
            <person name="Otsuki T."/>
            <person name="Sugiyama T."/>
            <person name="Irie R."/>
            <person name="Wakamatsu A."/>
            <person name="Hayashi K."/>
            <person name="Sato H."/>
            <person name="Nagai K."/>
            <person name="Kimura K."/>
            <person name="Makita H."/>
            <person name="Sekine M."/>
            <person name="Obayashi M."/>
            <person name="Nishi T."/>
            <person name="Shibahara T."/>
            <person name="Tanaka T."/>
            <person name="Ishii S."/>
            <person name="Yamamoto J."/>
            <person name="Saito K."/>
            <person name="Kawai Y."/>
            <person name="Isono Y."/>
            <person name="Nakamura Y."/>
            <person name="Nagahari K."/>
            <person name="Murakami K."/>
            <person name="Yasuda T."/>
            <person name="Iwayanagi T."/>
            <person name="Wagatsuma M."/>
            <person name="Shiratori A."/>
            <person name="Sudo H."/>
            <person name="Hosoiri T."/>
            <person name="Kaku Y."/>
            <person name="Kodaira H."/>
            <person name="Kondo H."/>
            <person name="Sugawara M."/>
            <person name="Takahashi M."/>
            <person name="Kanda K."/>
            <person name="Yokoi T."/>
            <person name="Furuya T."/>
            <person name="Kikkawa E."/>
            <person name="Omura Y."/>
            <person name="Abe K."/>
            <person name="Kamihara K."/>
            <person name="Katsuta N."/>
            <person name="Sato K."/>
            <person name="Tanikawa M."/>
            <person name="Yamazaki M."/>
            <person name="Ninomiya K."/>
            <person name="Ishibashi T."/>
            <person name="Yamashita H."/>
            <person name="Murakawa K."/>
            <person name="Fujimori K."/>
            <person name="Tanai H."/>
            <person name="Kimata M."/>
            <person name="Watanabe M."/>
            <person name="Hiraoka S."/>
            <person name="Chiba Y."/>
            <person name="Ishida S."/>
            <person name="Ono Y."/>
            <person name="Takiguchi S."/>
            <person name="Watanabe S."/>
            <person name="Yosida M."/>
            <person name="Hotuta T."/>
            <person name="Kusano J."/>
            <person name="Kanehori K."/>
            <person name="Takahashi-Fujii A."/>
            <person name="Hara H."/>
            <person name="Tanase T.-O."/>
            <person name="Nomura Y."/>
            <person name="Togiya S."/>
            <person name="Komai F."/>
            <person name="Hara R."/>
            <person name="Takeuchi K."/>
            <person name="Arita M."/>
            <person name="Imose N."/>
            <person name="Musashino K."/>
            <person name="Yuuki H."/>
            <person name="Oshima A."/>
            <person name="Sasaki N."/>
            <person name="Aotsuka S."/>
            <person name="Yoshikawa Y."/>
            <person name="Matsunawa H."/>
            <person name="Ichihara T."/>
            <person name="Shiohata N."/>
            <person name="Sano S."/>
            <person name="Moriya S."/>
            <person name="Momiyama H."/>
            <person name="Satoh N."/>
            <person name="Takami S."/>
            <person name="Terashima Y."/>
            <person name="Suzuki O."/>
            <person name="Nakagawa S."/>
            <person name="Senoh A."/>
            <person name="Mizoguchi H."/>
            <person name="Goto Y."/>
            <person name="Shimizu F."/>
            <person name="Wakebe H."/>
            <person name="Hishigaki H."/>
            <person name="Watanabe T."/>
            <person name="Sugiyama A."/>
            <person name="Takemoto M."/>
            <person name="Kawakami B."/>
            <person name="Yamazaki M."/>
            <person name="Watanabe K."/>
            <person name="Kumagai A."/>
            <person name="Itakura S."/>
            <person name="Fukuzumi Y."/>
            <person name="Fujimori Y."/>
            <person name="Komiyama M."/>
            <person name="Tashiro H."/>
            <person name="Tanigami A."/>
            <person name="Fujiwara T."/>
            <person name="Ono T."/>
            <person name="Yamada K."/>
            <person name="Fujii Y."/>
            <person name="Ozaki K."/>
            <person name="Hirao M."/>
            <person name="Ohmori Y."/>
            <person name="Kawabata A."/>
            <person name="Hikiji T."/>
            <person name="Kobatake N."/>
            <person name="Inagaki H."/>
            <person name="Ikema Y."/>
            <person name="Okamoto S."/>
            <person name="Okitani R."/>
            <person name="Kawakami T."/>
            <person name="Noguchi S."/>
            <person name="Itoh T."/>
            <person name="Shigeta K."/>
            <person name="Senba T."/>
            <person name="Matsumura K."/>
            <person name="Nakajima Y."/>
            <person name="Mizuno T."/>
            <person name="Morinaga M."/>
            <person name="Sasaki M."/>
            <person name="Togashi T."/>
            <person name="Oyama M."/>
            <person name="Hata H."/>
            <person name="Watanabe M."/>
            <person name="Komatsu T."/>
            <person name="Mizushima-Sugano J."/>
            <person name="Satoh T."/>
            <person name="Shirai Y."/>
            <person name="Takahashi Y."/>
            <person name="Nakagawa K."/>
            <person name="Okumura K."/>
            <person name="Nagase T."/>
            <person name="Nomura N."/>
            <person name="Kikuchi H."/>
            <person name="Masuho Y."/>
            <person name="Yamashita R."/>
            <person name="Nakai K."/>
            <person name="Yada T."/>
            <person name="Nakamura Y."/>
            <person name="Ohara O."/>
            <person name="Isogai T."/>
            <person name="Sugano S."/>
        </authorList>
    </citation>
    <scope>NUCLEOTIDE SEQUENCE [LARGE SCALE MRNA]</scope>
    <source>
        <tissue>Brain</tissue>
        <tissue>Ileal mucosa</tissue>
    </source>
</reference>
<reference key="3">
    <citation type="submission" date="2005-07" db="EMBL/GenBank/DDBJ databases">
        <authorList>
            <person name="Mural R.J."/>
            <person name="Istrail S."/>
            <person name="Sutton G.G."/>
            <person name="Florea L."/>
            <person name="Halpern A.L."/>
            <person name="Mobarry C.M."/>
            <person name="Lippert R."/>
            <person name="Walenz B."/>
            <person name="Shatkay H."/>
            <person name="Dew I."/>
            <person name="Miller J.R."/>
            <person name="Flanigan M.J."/>
            <person name="Edwards N.J."/>
            <person name="Bolanos R."/>
            <person name="Fasulo D."/>
            <person name="Halldorsson B.V."/>
            <person name="Hannenhalli S."/>
            <person name="Turner R."/>
            <person name="Yooseph S."/>
            <person name="Lu F."/>
            <person name="Nusskern D.R."/>
            <person name="Shue B.C."/>
            <person name="Zheng X.H."/>
            <person name="Zhong F."/>
            <person name="Delcher A.L."/>
            <person name="Huson D.H."/>
            <person name="Kravitz S.A."/>
            <person name="Mouchard L."/>
            <person name="Reinert K."/>
            <person name="Remington K.A."/>
            <person name="Clark A.G."/>
            <person name="Waterman M.S."/>
            <person name="Eichler E.E."/>
            <person name="Adams M.D."/>
            <person name="Hunkapiller M.W."/>
            <person name="Myers E.W."/>
            <person name="Venter J.C."/>
        </authorList>
    </citation>
    <scope>NUCLEOTIDE SEQUENCE [LARGE SCALE GENOMIC DNA]</scope>
</reference>
<reference key="4">
    <citation type="journal article" date="2004" name="Genome Res.">
        <title>The status, quality, and expansion of the NIH full-length cDNA project: the Mammalian Gene Collection (MGC).</title>
        <authorList>
            <consortium name="The MGC Project Team"/>
        </authorList>
    </citation>
    <scope>NUCLEOTIDE SEQUENCE [LARGE SCALE MRNA]</scope>
    <source>
        <tissue>Brain</tissue>
        <tissue>Lymph</tissue>
    </source>
</reference>
<reference key="5">
    <citation type="journal article" date="2001" name="FEBS Lett.">
        <title>Interaction between two adapter proteins, PAG and EBP50: a possible link between membrane rafts and actin cytoskeleton.</title>
        <authorList>
            <person name="Brdickova N."/>
            <person name="Brdicka T."/>
            <person name="Andera L."/>
            <person name="Spicka J."/>
            <person name="Angelisova P."/>
            <person name="Milgram S.L."/>
            <person name="Horejsi V."/>
        </authorList>
    </citation>
    <scope>INTERACTION WITH NHERF1</scope>
</reference>
<reference key="6">
    <citation type="journal article" date="2004" name="Anal. Chem.">
        <title>Robust phosphoproteomic profiling of tyrosine phosphorylation sites from human T cells using immobilized metal affinity chromatography and tandem mass spectrometry.</title>
        <authorList>
            <person name="Brill L.M."/>
            <person name="Salomon A.R."/>
            <person name="Ficarro S.B."/>
            <person name="Mukherji M."/>
            <person name="Stettler-Gill M."/>
            <person name="Peters E.C."/>
        </authorList>
    </citation>
    <scope>IDENTIFICATION BY MASS SPECTROMETRY [LARGE SCALE ANALYSIS]</scope>
    <source>
        <tissue>Leukemic T-cell</tissue>
    </source>
</reference>
<reference key="7">
    <citation type="journal article" date="2006" name="Blood">
        <title>Transmembrane adaptor molecules: a new category of lymphoid-cell markers.</title>
        <authorList>
            <person name="Tedoldi S."/>
            <person name="Paterson J.C."/>
            <person name="Hansmann M.-L."/>
            <person name="Natkunam Y."/>
            <person name="Rudiger T."/>
            <person name="Angelisova P."/>
            <person name="Du M.Q."/>
            <person name="Roberton H."/>
            <person name="Roncador G."/>
            <person name="Sanchez L."/>
            <person name="Pozzobon M."/>
            <person name="Masir N."/>
            <person name="Barry R."/>
            <person name="Pileri S."/>
            <person name="Mason D.Y."/>
            <person name="Marafioti T."/>
            <person name="Horejsi V."/>
        </authorList>
    </citation>
    <scope>TISSUE SPECIFICITY</scope>
</reference>
<reference key="8">
    <citation type="journal article" date="2008" name="Blood">
        <title>Oncogenic association of the Cbp/PAG adaptor protein with the Lyn tyrosine kinase in human B-NHL rafts.</title>
        <authorList>
            <person name="Tauzin S."/>
            <person name="Ding H."/>
            <person name="Khatib K."/>
            <person name="Ahmad I."/>
            <person name="Burdevet D."/>
            <person name="van Echten-Deckert G."/>
            <person name="Lindquist J.A."/>
            <person name="Schraven B."/>
            <person name="Din N.U."/>
            <person name="Borisch B."/>
            <person name="Hoessli D.C."/>
        </authorList>
    </citation>
    <scope>PHOSPHORYLATION AT TYR-317</scope>
    <scope>INTERACTION WITH LYN AND STAT3</scope>
    <scope>SUBCELLULAR LOCATION</scope>
</reference>
<reference key="9">
    <citation type="journal article" date="2009" name="Mol. Cell. Proteomics">
        <title>Large-scale proteomics analysis of the human kinome.</title>
        <authorList>
            <person name="Oppermann F.S."/>
            <person name="Gnad F."/>
            <person name="Olsen J.V."/>
            <person name="Hornberger R."/>
            <person name="Greff Z."/>
            <person name="Keri G."/>
            <person name="Mann M."/>
            <person name="Daub H."/>
        </authorList>
    </citation>
    <scope>IDENTIFICATION BY MASS SPECTROMETRY [LARGE SCALE ANALYSIS]</scope>
</reference>
<reference key="10">
    <citation type="journal article" date="2009" name="Sci. Signal.">
        <title>Quantitative phosphoproteomic analysis of T cell receptor signaling reveals system-wide modulation of protein-protein interactions.</title>
        <authorList>
            <person name="Mayya V."/>
            <person name="Lundgren D.H."/>
            <person name="Hwang S.-I."/>
            <person name="Rezaul K."/>
            <person name="Wu L."/>
            <person name="Eng J.K."/>
            <person name="Rodionov V."/>
            <person name="Han D.K."/>
        </authorList>
    </citation>
    <scope>PHOSPHORYLATION [LARGE SCALE ANALYSIS] AT TYR-227; SER-229; TYR-317; TYR-359; TYR-387 AND TYR-417</scope>
    <scope>IDENTIFICATION BY MASS SPECTROMETRY [LARGE SCALE ANALYSIS]</scope>
    <source>
        <tissue>Leukemic T-cell</tissue>
    </source>
</reference>